<name>RS3_FRAT1</name>
<evidence type="ECO:0000255" key="1">
    <source>
        <dbReference type="HAMAP-Rule" id="MF_01309"/>
    </source>
</evidence>
<evidence type="ECO:0000305" key="2"/>
<sequence length="222" mass="24854">MGQKVNPNGIRLGYIRDWRSTWYADSSRYATKLNEDIKVREFLHKKLAAAAVSKIQIERPAQNAKITIHTARSGIVIGKKGEDVEKLRAEVHKLMGIPVQINIEEVRKPEIDAKLVAESVAQQLEKRVMFRRAMKKAMQAAMKSGAKGIKIMVSGRLGGAEIARSEWARDGRVPLQTFRADVDYATAEALTTYGVIGVKVWIYKGEILPGQIAEKKNNKKRS</sequence>
<feature type="chain" id="PRO_0000293792" description="Small ribosomal subunit protein uS3">
    <location>
        <begin position="1"/>
        <end position="222"/>
    </location>
</feature>
<feature type="domain" description="KH type-2" evidence="1">
    <location>
        <begin position="39"/>
        <end position="107"/>
    </location>
</feature>
<organism>
    <name type="scientific">Francisella tularensis subsp. tularensis (strain FSC 198)</name>
    <dbReference type="NCBI Taxonomy" id="393115"/>
    <lineage>
        <taxon>Bacteria</taxon>
        <taxon>Pseudomonadati</taxon>
        <taxon>Pseudomonadota</taxon>
        <taxon>Gammaproteobacteria</taxon>
        <taxon>Thiotrichales</taxon>
        <taxon>Francisellaceae</taxon>
        <taxon>Francisella</taxon>
    </lineage>
</organism>
<reference key="1">
    <citation type="journal article" date="2007" name="PLoS ONE">
        <title>Genome sequencing shows that European isolates of Francisella tularensis subspecies tularensis are almost identical to US laboratory strain Schu S4.</title>
        <authorList>
            <person name="Chaudhuri R.R."/>
            <person name="Ren C.-P."/>
            <person name="Desmond L."/>
            <person name="Vincent G.A."/>
            <person name="Silman N.J."/>
            <person name="Brehm J.K."/>
            <person name="Elmore M.J."/>
            <person name="Hudson M.J."/>
            <person name="Forsman M."/>
            <person name="Isherwood K.E."/>
            <person name="Gurycova D."/>
            <person name="Minton N.P."/>
            <person name="Titball R.W."/>
            <person name="Pallen M.J."/>
            <person name="Vipond R."/>
        </authorList>
    </citation>
    <scope>NUCLEOTIDE SEQUENCE [LARGE SCALE GENOMIC DNA]</scope>
    <source>
        <strain>FSC 198</strain>
    </source>
</reference>
<gene>
    <name evidence="1" type="primary">rpsC</name>
    <name type="ordered locus">FTF0331</name>
</gene>
<proteinExistence type="inferred from homology"/>
<keyword id="KW-0687">Ribonucleoprotein</keyword>
<keyword id="KW-0689">Ribosomal protein</keyword>
<keyword id="KW-0694">RNA-binding</keyword>
<keyword id="KW-0699">rRNA-binding</keyword>
<accession>Q14JB4</accession>
<dbReference type="EMBL" id="AM286280">
    <property type="protein sequence ID" value="CAL08347.1"/>
    <property type="molecule type" value="Genomic_DNA"/>
</dbReference>
<dbReference type="RefSeq" id="WP_003028888.1">
    <property type="nucleotide sequence ID" value="NC_008245.1"/>
</dbReference>
<dbReference type="SMR" id="Q14JB4"/>
<dbReference type="KEGG" id="ftf:FTF0331"/>
<dbReference type="HOGENOM" id="CLU_058591_0_2_6"/>
<dbReference type="GO" id="GO:0022627">
    <property type="term" value="C:cytosolic small ribosomal subunit"/>
    <property type="evidence" value="ECO:0007669"/>
    <property type="project" value="TreeGrafter"/>
</dbReference>
<dbReference type="GO" id="GO:0003729">
    <property type="term" value="F:mRNA binding"/>
    <property type="evidence" value="ECO:0007669"/>
    <property type="project" value="UniProtKB-UniRule"/>
</dbReference>
<dbReference type="GO" id="GO:0019843">
    <property type="term" value="F:rRNA binding"/>
    <property type="evidence" value="ECO:0007669"/>
    <property type="project" value="UniProtKB-UniRule"/>
</dbReference>
<dbReference type="GO" id="GO:0003735">
    <property type="term" value="F:structural constituent of ribosome"/>
    <property type="evidence" value="ECO:0007669"/>
    <property type="project" value="InterPro"/>
</dbReference>
<dbReference type="GO" id="GO:0006412">
    <property type="term" value="P:translation"/>
    <property type="evidence" value="ECO:0007669"/>
    <property type="project" value="UniProtKB-UniRule"/>
</dbReference>
<dbReference type="CDD" id="cd02412">
    <property type="entry name" value="KH-II_30S_S3"/>
    <property type="match status" value="1"/>
</dbReference>
<dbReference type="FunFam" id="3.30.1140.32:FF:000001">
    <property type="entry name" value="30S ribosomal protein S3"/>
    <property type="match status" value="1"/>
</dbReference>
<dbReference type="FunFam" id="3.30.300.20:FF:000001">
    <property type="entry name" value="30S ribosomal protein S3"/>
    <property type="match status" value="1"/>
</dbReference>
<dbReference type="Gene3D" id="3.30.300.20">
    <property type="match status" value="1"/>
</dbReference>
<dbReference type="Gene3D" id="3.30.1140.32">
    <property type="entry name" value="Ribosomal protein S3, C-terminal domain"/>
    <property type="match status" value="1"/>
</dbReference>
<dbReference type="HAMAP" id="MF_01309_B">
    <property type="entry name" value="Ribosomal_uS3_B"/>
    <property type="match status" value="1"/>
</dbReference>
<dbReference type="InterPro" id="IPR004087">
    <property type="entry name" value="KH_dom"/>
</dbReference>
<dbReference type="InterPro" id="IPR015946">
    <property type="entry name" value="KH_dom-like_a/b"/>
</dbReference>
<dbReference type="InterPro" id="IPR004044">
    <property type="entry name" value="KH_dom_type_2"/>
</dbReference>
<dbReference type="InterPro" id="IPR009019">
    <property type="entry name" value="KH_sf_prok-type"/>
</dbReference>
<dbReference type="InterPro" id="IPR036419">
    <property type="entry name" value="Ribosomal_S3_C_sf"/>
</dbReference>
<dbReference type="InterPro" id="IPR005704">
    <property type="entry name" value="Ribosomal_uS3_bac-typ"/>
</dbReference>
<dbReference type="InterPro" id="IPR001351">
    <property type="entry name" value="Ribosomal_uS3_C"/>
</dbReference>
<dbReference type="InterPro" id="IPR018280">
    <property type="entry name" value="Ribosomal_uS3_CS"/>
</dbReference>
<dbReference type="NCBIfam" id="TIGR01009">
    <property type="entry name" value="rpsC_bact"/>
    <property type="match status" value="1"/>
</dbReference>
<dbReference type="PANTHER" id="PTHR11760">
    <property type="entry name" value="30S/40S RIBOSOMAL PROTEIN S3"/>
    <property type="match status" value="1"/>
</dbReference>
<dbReference type="PANTHER" id="PTHR11760:SF19">
    <property type="entry name" value="SMALL RIBOSOMAL SUBUNIT PROTEIN US3C"/>
    <property type="match status" value="1"/>
</dbReference>
<dbReference type="Pfam" id="PF07650">
    <property type="entry name" value="KH_2"/>
    <property type="match status" value="1"/>
</dbReference>
<dbReference type="Pfam" id="PF00189">
    <property type="entry name" value="Ribosomal_S3_C"/>
    <property type="match status" value="1"/>
</dbReference>
<dbReference type="SMART" id="SM00322">
    <property type="entry name" value="KH"/>
    <property type="match status" value="1"/>
</dbReference>
<dbReference type="SUPFAM" id="SSF54814">
    <property type="entry name" value="Prokaryotic type KH domain (KH-domain type II)"/>
    <property type="match status" value="1"/>
</dbReference>
<dbReference type="SUPFAM" id="SSF54821">
    <property type="entry name" value="Ribosomal protein S3 C-terminal domain"/>
    <property type="match status" value="1"/>
</dbReference>
<dbReference type="PROSITE" id="PS50823">
    <property type="entry name" value="KH_TYPE_2"/>
    <property type="match status" value="1"/>
</dbReference>
<dbReference type="PROSITE" id="PS00548">
    <property type="entry name" value="RIBOSOMAL_S3"/>
    <property type="match status" value="1"/>
</dbReference>
<protein>
    <recommendedName>
        <fullName evidence="1">Small ribosomal subunit protein uS3</fullName>
    </recommendedName>
    <alternativeName>
        <fullName evidence="2">30S ribosomal protein S3</fullName>
    </alternativeName>
</protein>
<comment type="function">
    <text evidence="1">Binds the lower part of the 30S subunit head. Binds mRNA in the 70S ribosome, positioning it for translation.</text>
</comment>
<comment type="subunit">
    <text evidence="1">Part of the 30S ribosomal subunit. Forms a tight complex with proteins S10 and S14.</text>
</comment>
<comment type="similarity">
    <text evidence="1">Belongs to the universal ribosomal protein uS3 family.</text>
</comment>